<feature type="chain" id="PRO_0000348570" description="DnaJ homolog subfamily C member 25">
    <location>
        <begin position="1"/>
        <end position="357"/>
    </location>
</feature>
<feature type="transmembrane region" description="Helical" evidence="1">
    <location>
        <begin position="19"/>
        <end position="39"/>
    </location>
</feature>
<feature type="transmembrane region" description="Helical" evidence="1">
    <location>
        <begin position="147"/>
        <end position="167"/>
    </location>
</feature>
<feature type="transmembrane region" description="Helical" evidence="1">
    <location>
        <begin position="241"/>
        <end position="261"/>
    </location>
</feature>
<feature type="domain" description="J" evidence="2">
    <location>
        <begin position="48"/>
        <end position="121"/>
    </location>
</feature>
<feature type="splice variant" id="VSP_035183" description="In isoform 2." evidence="3">
    <location>
        <begin position="1"/>
        <end position="119"/>
    </location>
</feature>
<sequence length="357" mass="41937">MAARLALRGGPGAAGQRPWLLLAPLLLVPLLARPAEALVEGLYCGTRDCYEVLGVSRSASKAEIARAYRQLARRYHPDRYRPEPGDGPGGAPPSAEAFLLVATAYETLKDEETRKDYDYMLDHPEEYYSHYYHYYSRRLAPKVDVRVVILVSVCAISMFQYFSWWNSYNKAISYLATVPKYRIQATEIAKEQGLLKKAKEKGKNKKSKEEIRDEEENIIKNIIKSKIDIKGGYQKPQVRDLLLFQVILAPVHLCSYIAWYCRWIYNFNIKGKEYGEEERLYIIRKSMKMSQSQFDSLEDHQKEMFLKRELWIKENYEVYKQEQEEELKKKLANDPRWKRYRRWMKNEGPGRLTFVDD</sequence>
<evidence type="ECO:0000255" key="1"/>
<evidence type="ECO:0000255" key="2">
    <source>
        <dbReference type="PROSITE-ProRule" id="PRU00286"/>
    </source>
</evidence>
<evidence type="ECO:0000303" key="3">
    <source>
    </source>
</evidence>
<evidence type="ECO:0000305" key="4"/>
<dbReference type="EMBL" id="AL805972">
    <property type="protein sequence ID" value="CAM17653.1"/>
    <property type="status" value="ALT_SEQ"/>
    <property type="molecule type" value="Genomic_DNA"/>
</dbReference>
<dbReference type="EMBL" id="AL805972">
    <property type="protein sequence ID" value="CAM17654.2"/>
    <property type="molecule type" value="Genomic_DNA"/>
</dbReference>
<dbReference type="EMBL" id="BC119039">
    <property type="protein sequence ID" value="AAI19040.1"/>
    <property type="molecule type" value="mRNA"/>
</dbReference>
<dbReference type="EMBL" id="BC120693">
    <property type="protein sequence ID" value="AAI20694.1"/>
    <property type="molecule type" value="mRNA"/>
</dbReference>
<dbReference type="EMBL" id="AK136359">
    <property type="protein sequence ID" value="BAE22945.1"/>
    <property type="status" value="ALT_INIT"/>
    <property type="molecule type" value="mRNA"/>
</dbReference>
<dbReference type="CCDS" id="CCDS18216.2">
    <molecule id="A2ALW5-1"/>
</dbReference>
<dbReference type="RefSeq" id="NP_001028337.2">
    <molecule id="A2ALW5-1"/>
    <property type="nucleotide sequence ID" value="NM_001033165.3"/>
</dbReference>
<dbReference type="RefSeq" id="XP_006538338.1">
    <molecule id="A2ALW5-2"/>
    <property type="nucleotide sequence ID" value="XM_006538275.4"/>
</dbReference>
<dbReference type="RefSeq" id="XP_006538339.1">
    <molecule id="A2ALW5-2"/>
    <property type="nucleotide sequence ID" value="XM_006538276.5"/>
</dbReference>
<dbReference type="SMR" id="A2ALW5"/>
<dbReference type="BioGRID" id="215368">
    <property type="interactions" value="3"/>
</dbReference>
<dbReference type="FunCoup" id="A2ALW5">
    <property type="interactions" value="1191"/>
</dbReference>
<dbReference type="STRING" id="10090.ENSMUSP00000092680"/>
<dbReference type="GlyGen" id="A2ALW5">
    <property type="glycosylation" value="1 site, 1 O-linked glycan (1 site)"/>
</dbReference>
<dbReference type="iPTMnet" id="A2ALW5"/>
<dbReference type="PhosphoSitePlus" id="A2ALW5"/>
<dbReference type="PaxDb" id="10090-ENSMUSP00000092680"/>
<dbReference type="PeptideAtlas" id="A2ALW5"/>
<dbReference type="ProteomicsDB" id="279671">
    <molecule id="A2ALW5-1"/>
</dbReference>
<dbReference type="ProteomicsDB" id="279672">
    <molecule id="A2ALW5-2"/>
</dbReference>
<dbReference type="Pumba" id="A2ALW5"/>
<dbReference type="Ensembl" id="ENSMUST00000095070.4">
    <molecule id="A2ALW5-1"/>
    <property type="protein sequence ID" value="ENSMUSP00000092680.4"/>
    <property type="gene ID" value="ENSMUSG00000070972.14"/>
</dbReference>
<dbReference type="Ensembl" id="ENSMUST00000152199.9">
    <molecule id="A2ALW5-2"/>
    <property type="protein sequence ID" value="ENSMUSP00000118048.3"/>
    <property type="gene ID" value="ENSMUSG00000070972.14"/>
</dbReference>
<dbReference type="GeneID" id="72429"/>
<dbReference type="KEGG" id="mmu:72429"/>
<dbReference type="UCSC" id="uc008szn.2">
    <molecule id="A2ALW5-1"/>
    <property type="organism name" value="mouse"/>
</dbReference>
<dbReference type="AGR" id="MGI:1919679"/>
<dbReference type="CTD" id="548645"/>
<dbReference type="MGI" id="MGI:1919679">
    <property type="gene designation" value="Dnajc25"/>
</dbReference>
<dbReference type="VEuPathDB" id="HostDB:ENSMUSG00000070972"/>
<dbReference type="eggNOG" id="KOG0722">
    <property type="taxonomic scope" value="Eukaryota"/>
</dbReference>
<dbReference type="GeneTree" id="ENSGT00390000013355"/>
<dbReference type="HOGENOM" id="CLU_055735_0_0_1"/>
<dbReference type="InParanoid" id="A2ALW5"/>
<dbReference type="OMA" id="WFWRYTV"/>
<dbReference type="OrthoDB" id="270167at2759"/>
<dbReference type="PhylomeDB" id="A2ALW5"/>
<dbReference type="TreeFam" id="TF313563"/>
<dbReference type="BioGRID-ORCS" id="72429">
    <property type="hits" value="1 hit in 79 CRISPR screens"/>
</dbReference>
<dbReference type="PRO" id="PR:A2ALW5"/>
<dbReference type="Proteomes" id="UP000000589">
    <property type="component" value="Chromosome 4"/>
</dbReference>
<dbReference type="RNAct" id="A2ALW5">
    <property type="molecule type" value="protein"/>
</dbReference>
<dbReference type="Bgee" id="ENSMUSG00000070972">
    <property type="expression patterns" value="Expressed in humerus cartilage element and 150 other cell types or tissues"/>
</dbReference>
<dbReference type="ExpressionAtlas" id="A2ALW5">
    <property type="expression patterns" value="baseline and differential"/>
</dbReference>
<dbReference type="GO" id="GO:0016020">
    <property type="term" value="C:membrane"/>
    <property type="evidence" value="ECO:0007669"/>
    <property type="project" value="UniProtKB-SubCell"/>
</dbReference>
<dbReference type="GO" id="GO:0006457">
    <property type="term" value="P:protein folding"/>
    <property type="evidence" value="ECO:0007669"/>
    <property type="project" value="InterPro"/>
</dbReference>
<dbReference type="CDD" id="cd06257">
    <property type="entry name" value="DnaJ"/>
    <property type="match status" value="1"/>
</dbReference>
<dbReference type="FunFam" id="1.10.287.110:FF:000036">
    <property type="entry name" value="dnaJ homolog subfamily C member 25"/>
    <property type="match status" value="1"/>
</dbReference>
<dbReference type="Gene3D" id="1.10.287.110">
    <property type="entry name" value="DnaJ domain"/>
    <property type="match status" value="1"/>
</dbReference>
<dbReference type="InterPro" id="IPR001623">
    <property type="entry name" value="DnaJ_domain"/>
</dbReference>
<dbReference type="InterPro" id="IPR044632">
    <property type="entry name" value="DNAJC25-like"/>
</dbReference>
<dbReference type="InterPro" id="IPR036869">
    <property type="entry name" value="J_dom_sf"/>
</dbReference>
<dbReference type="PANTHER" id="PTHR44176">
    <property type="entry name" value="DNAJ HOMOLOG SUBFAMILY C MEMBER 25"/>
    <property type="match status" value="1"/>
</dbReference>
<dbReference type="PANTHER" id="PTHR44176:SF1">
    <property type="entry name" value="DNAJ HOMOLOG SUBFAMILY C MEMBER 25"/>
    <property type="match status" value="1"/>
</dbReference>
<dbReference type="Pfam" id="PF00226">
    <property type="entry name" value="DnaJ"/>
    <property type="match status" value="1"/>
</dbReference>
<dbReference type="PRINTS" id="PR00625">
    <property type="entry name" value="JDOMAIN"/>
</dbReference>
<dbReference type="SMART" id="SM00271">
    <property type="entry name" value="DnaJ"/>
    <property type="match status" value="1"/>
</dbReference>
<dbReference type="SUPFAM" id="SSF46565">
    <property type="entry name" value="Chaperone J-domain"/>
    <property type="match status" value="1"/>
</dbReference>
<dbReference type="PROSITE" id="PS50076">
    <property type="entry name" value="DNAJ_2"/>
    <property type="match status" value="1"/>
</dbReference>
<name>DJC25_MOUSE</name>
<proteinExistence type="evidence at protein level"/>
<accession>A2ALW5</accession>
<accession>A2ALW4</accession>
<accession>Q0VBC8</accession>
<accession>Q3UWH0</accession>
<keyword id="KW-0025">Alternative splicing</keyword>
<keyword id="KW-0143">Chaperone</keyword>
<keyword id="KW-0472">Membrane</keyword>
<keyword id="KW-1185">Reference proteome</keyword>
<keyword id="KW-0812">Transmembrane</keyword>
<keyword id="KW-1133">Transmembrane helix</keyword>
<protein>
    <recommendedName>
        <fullName>DnaJ homolog subfamily C member 25</fullName>
    </recommendedName>
</protein>
<organism>
    <name type="scientific">Mus musculus</name>
    <name type="common">Mouse</name>
    <dbReference type="NCBI Taxonomy" id="10090"/>
    <lineage>
        <taxon>Eukaryota</taxon>
        <taxon>Metazoa</taxon>
        <taxon>Chordata</taxon>
        <taxon>Craniata</taxon>
        <taxon>Vertebrata</taxon>
        <taxon>Euteleostomi</taxon>
        <taxon>Mammalia</taxon>
        <taxon>Eutheria</taxon>
        <taxon>Euarchontoglires</taxon>
        <taxon>Glires</taxon>
        <taxon>Rodentia</taxon>
        <taxon>Myomorpha</taxon>
        <taxon>Muroidea</taxon>
        <taxon>Muridae</taxon>
        <taxon>Murinae</taxon>
        <taxon>Mus</taxon>
        <taxon>Mus</taxon>
    </lineage>
</organism>
<reference key="1">
    <citation type="journal article" date="2009" name="PLoS Biol.">
        <title>Lineage-specific biology revealed by a finished genome assembly of the mouse.</title>
        <authorList>
            <person name="Church D.M."/>
            <person name="Goodstadt L."/>
            <person name="Hillier L.W."/>
            <person name="Zody M.C."/>
            <person name="Goldstein S."/>
            <person name="She X."/>
            <person name="Bult C.J."/>
            <person name="Agarwala R."/>
            <person name="Cherry J.L."/>
            <person name="DiCuccio M."/>
            <person name="Hlavina W."/>
            <person name="Kapustin Y."/>
            <person name="Meric P."/>
            <person name="Maglott D."/>
            <person name="Birtle Z."/>
            <person name="Marques A.C."/>
            <person name="Graves T."/>
            <person name="Zhou S."/>
            <person name="Teague B."/>
            <person name="Potamousis K."/>
            <person name="Churas C."/>
            <person name="Place M."/>
            <person name="Herschleb J."/>
            <person name="Runnheim R."/>
            <person name="Forrest D."/>
            <person name="Amos-Landgraf J."/>
            <person name="Schwartz D.C."/>
            <person name="Cheng Z."/>
            <person name="Lindblad-Toh K."/>
            <person name="Eichler E.E."/>
            <person name="Ponting C.P."/>
        </authorList>
    </citation>
    <scope>NUCLEOTIDE SEQUENCE [LARGE SCALE GENOMIC DNA]</scope>
    <source>
        <strain>C57BL/6J</strain>
    </source>
</reference>
<reference key="2">
    <citation type="journal article" date="2004" name="Genome Res.">
        <title>The status, quality, and expansion of the NIH full-length cDNA project: the Mammalian Gene Collection (MGC).</title>
        <authorList>
            <consortium name="The MGC Project Team"/>
        </authorList>
    </citation>
    <scope>NUCLEOTIDE SEQUENCE [LARGE SCALE MRNA] (ISOFORM 2)</scope>
    <source>
        <tissue>Brain</tissue>
    </source>
</reference>
<reference key="3">
    <citation type="journal article" date="2005" name="Science">
        <title>The transcriptional landscape of the mammalian genome.</title>
        <authorList>
            <person name="Carninci P."/>
            <person name="Kasukawa T."/>
            <person name="Katayama S."/>
            <person name="Gough J."/>
            <person name="Frith M.C."/>
            <person name="Maeda N."/>
            <person name="Oyama R."/>
            <person name="Ravasi T."/>
            <person name="Lenhard B."/>
            <person name="Wells C."/>
            <person name="Kodzius R."/>
            <person name="Shimokawa K."/>
            <person name="Bajic V.B."/>
            <person name="Brenner S.E."/>
            <person name="Batalov S."/>
            <person name="Forrest A.R."/>
            <person name="Zavolan M."/>
            <person name="Davis M.J."/>
            <person name="Wilming L.G."/>
            <person name="Aidinis V."/>
            <person name="Allen J.E."/>
            <person name="Ambesi-Impiombato A."/>
            <person name="Apweiler R."/>
            <person name="Aturaliya R.N."/>
            <person name="Bailey T.L."/>
            <person name="Bansal M."/>
            <person name="Baxter L."/>
            <person name="Beisel K.W."/>
            <person name="Bersano T."/>
            <person name="Bono H."/>
            <person name="Chalk A.M."/>
            <person name="Chiu K.P."/>
            <person name="Choudhary V."/>
            <person name="Christoffels A."/>
            <person name="Clutterbuck D.R."/>
            <person name="Crowe M.L."/>
            <person name="Dalla E."/>
            <person name="Dalrymple B.P."/>
            <person name="de Bono B."/>
            <person name="Della Gatta G."/>
            <person name="di Bernardo D."/>
            <person name="Down T."/>
            <person name="Engstrom P."/>
            <person name="Fagiolini M."/>
            <person name="Faulkner G."/>
            <person name="Fletcher C.F."/>
            <person name="Fukushima T."/>
            <person name="Furuno M."/>
            <person name="Futaki S."/>
            <person name="Gariboldi M."/>
            <person name="Georgii-Hemming P."/>
            <person name="Gingeras T.R."/>
            <person name="Gojobori T."/>
            <person name="Green R.E."/>
            <person name="Gustincich S."/>
            <person name="Harbers M."/>
            <person name="Hayashi Y."/>
            <person name="Hensch T.K."/>
            <person name="Hirokawa N."/>
            <person name="Hill D."/>
            <person name="Huminiecki L."/>
            <person name="Iacono M."/>
            <person name="Ikeo K."/>
            <person name="Iwama A."/>
            <person name="Ishikawa T."/>
            <person name="Jakt M."/>
            <person name="Kanapin A."/>
            <person name="Katoh M."/>
            <person name="Kawasawa Y."/>
            <person name="Kelso J."/>
            <person name="Kitamura H."/>
            <person name="Kitano H."/>
            <person name="Kollias G."/>
            <person name="Krishnan S.P."/>
            <person name="Kruger A."/>
            <person name="Kummerfeld S.K."/>
            <person name="Kurochkin I.V."/>
            <person name="Lareau L.F."/>
            <person name="Lazarevic D."/>
            <person name="Lipovich L."/>
            <person name="Liu J."/>
            <person name="Liuni S."/>
            <person name="McWilliam S."/>
            <person name="Madan Babu M."/>
            <person name="Madera M."/>
            <person name="Marchionni L."/>
            <person name="Matsuda H."/>
            <person name="Matsuzawa S."/>
            <person name="Miki H."/>
            <person name="Mignone F."/>
            <person name="Miyake S."/>
            <person name="Morris K."/>
            <person name="Mottagui-Tabar S."/>
            <person name="Mulder N."/>
            <person name="Nakano N."/>
            <person name="Nakauchi H."/>
            <person name="Ng P."/>
            <person name="Nilsson R."/>
            <person name="Nishiguchi S."/>
            <person name="Nishikawa S."/>
            <person name="Nori F."/>
            <person name="Ohara O."/>
            <person name="Okazaki Y."/>
            <person name="Orlando V."/>
            <person name="Pang K.C."/>
            <person name="Pavan W.J."/>
            <person name="Pavesi G."/>
            <person name="Pesole G."/>
            <person name="Petrovsky N."/>
            <person name="Piazza S."/>
            <person name="Reed J."/>
            <person name="Reid J.F."/>
            <person name="Ring B.Z."/>
            <person name="Ringwald M."/>
            <person name="Rost B."/>
            <person name="Ruan Y."/>
            <person name="Salzberg S.L."/>
            <person name="Sandelin A."/>
            <person name="Schneider C."/>
            <person name="Schoenbach C."/>
            <person name="Sekiguchi K."/>
            <person name="Semple C.A."/>
            <person name="Seno S."/>
            <person name="Sessa L."/>
            <person name="Sheng Y."/>
            <person name="Shibata Y."/>
            <person name="Shimada H."/>
            <person name="Shimada K."/>
            <person name="Silva D."/>
            <person name="Sinclair B."/>
            <person name="Sperling S."/>
            <person name="Stupka E."/>
            <person name="Sugiura K."/>
            <person name="Sultana R."/>
            <person name="Takenaka Y."/>
            <person name="Taki K."/>
            <person name="Tammoja K."/>
            <person name="Tan S.L."/>
            <person name="Tang S."/>
            <person name="Taylor M.S."/>
            <person name="Tegner J."/>
            <person name="Teichmann S.A."/>
            <person name="Ueda H.R."/>
            <person name="van Nimwegen E."/>
            <person name="Verardo R."/>
            <person name="Wei C.L."/>
            <person name="Yagi K."/>
            <person name="Yamanishi H."/>
            <person name="Zabarovsky E."/>
            <person name="Zhu S."/>
            <person name="Zimmer A."/>
            <person name="Hide W."/>
            <person name="Bult C."/>
            <person name="Grimmond S.M."/>
            <person name="Teasdale R.D."/>
            <person name="Liu E.T."/>
            <person name="Brusic V."/>
            <person name="Quackenbush J."/>
            <person name="Wahlestedt C."/>
            <person name="Mattick J.S."/>
            <person name="Hume D.A."/>
            <person name="Kai C."/>
            <person name="Sasaki D."/>
            <person name="Tomaru Y."/>
            <person name="Fukuda S."/>
            <person name="Kanamori-Katayama M."/>
            <person name="Suzuki M."/>
            <person name="Aoki J."/>
            <person name="Arakawa T."/>
            <person name="Iida J."/>
            <person name="Imamura K."/>
            <person name="Itoh M."/>
            <person name="Kato T."/>
            <person name="Kawaji H."/>
            <person name="Kawagashira N."/>
            <person name="Kawashima T."/>
            <person name="Kojima M."/>
            <person name="Kondo S."/>
            <person name="Konno H."/>
            <person name="Nakano K."/>
            <person name="Ninomiya N."/>
            <person name="Nishio T."/>
            <person name="Okada M."/>
            <person name="Plessy C."/>
            <person name="Shibata K."/>
            <person name="Shiraki T."/>
            <person name="Suzuki S."/>
            <person name="Tagami M."/>
            <person name="Waki K."/>
            <person name="Watahiki A."/>
            <person name="Okamura-Oho Y."/>
            <person name="Suzuki H."/>
            <person name="Kawai J."/>
            <person name="Hayashizaki Y."/>
        </authorList>
    </citation>
    <scope>NUCLEOTIDE SEQUENCE [LARGE SCALE MRNA] OF 91-357 (ISOFORM 1)</scope>
    <source>
        <strain>C57BL/6J</strain>
        <tissue>Embryo</tissue>
    </source>
</reference>
<reference key="4">
    <citation type="journal article" date="2010" name="Cell">
        <title>A tissue-specific atlas of mouse protein phosphorylation and expression.</title>
        <authorList>
            <person name="Huttlin E.L."/>
            <person name="Jedrychowski M.P."/>
            <person name="Elias J.E."/>
            <person name="Goswami T."/>
            <person name="Rad R."/>
            <person name="Beausoleil S.A."/>
            <person name="Villen J."/>
            <person name="Haas W."/>
            <person name="Sowa M.E."/>
            <person name="Gygi S.P."/>
        </authorList>
    </citation>
    <scope>IDENTIFICATION BY MASS SPECTROMETRY [LARGE SCALE ANALYSIS]</scope>
    <source>
        <tissue>Heart</tissue>
        <tissue>Liver</tissue>
        <tissue>Testis</tissue>
    </source>
</reference>
<comment type="subcellular location">
    <subcellularLocation>
        <location evidence="4">Membrane</location>
        <topology evidence="4">Multi-pass membrane protein</topology>
    </subcellularLocation>
</comment>
<comment type="alternative products">
    <event type="alternative splicing"/>
    <isoform>
        <id>A2ALW5-1</id>
        <name>1</name>
        <sequence type="displayed"/>
    </isoform>
    <isoform>
        <id>A2ALW5-2</id>
        <name>2</name>
        <sequence type="described" ref="VSP_035183"/>
    </isoform>
</comment>
<comment type="similarity">
    <text evidence="4">Belongs to the DNAJC25 family.</text>
</comment>
<comment type="sequence caution" evidence="4">
    <conflict type="erroneous initiation">
        <sequence resource="EMBL-CDS" id="BAE22945"/>
    </conflict>
</comment>
<comment type="sequence caution" evidence="4">
    <conflict type="erroneous gene model prediction">
        <sequence resource="EMBL-CDS" id="CAM17653"/>
    </conflict>
</comment>
<gene>
    <name type="primary">Dnajc25</name>
</gene>